<gene>
    <name evidence="1" type="primary">nuoC</name>
    <name evidence="1" type="synonym">nuoCD</name>
    <name evidence="1" type="synonym">nuoD</name>
    <name type="ordered locus">SSPA0502</name>
</gene>
<name>NUOCD_SALPK</name>
<accession>B5BCM0</accession>
<dbReference type="EC" id="7.1.1.-" evidence="1"/>
<dbReference type="EMBL" id="FM200053">
    <property type="protein sequence ID" value="CAR58631.1"/>
    <property type="molecule type" value="Genomic_DNA"/>
</dbReference>
<dbReference type="RefSeq" id="WP_000247855.1">
    <property type="nucleotide sequence ID" value="NC_011147.1"/>
</dbReference>
<dbReference type="SMR" id="B5BCM0"/>
<dbReference type="KEGG" id="sek:SSPA0502"/>
<dbReference type="HOGENOM" id="CLU_015134_3_2_6"/>
<dbReference type="Proteomes" id="UP000001869">
    <property type="component" value="Chromosome"/>
</dbReference>
<dbReference type="GO" id="GO:0030964">
    <property type="term" value="C:NADH dehydrogenase complex"/>
    <property type="evidence" value="ECO:0007669"/>
    <property type="project" value="InterPro"/>
</dbReference>
<dbReference type="GO" id="GO:0005886">
    <property type="term" value="C:plasma membrane"/>
    <property type="evidence" value="ECO:0007669"/>
    <property type="project" value="UniProtKB-SubCell"/>
</dbReference>
<dbReference type="GO" id="GO:0051287">
    <property type="term" value="F:NAD binding"/>
    <property type="evidence" value="ECO:0007669"/>
    <property type="project" value="InterPro"/>
</dbReference>
<dbReference type="GO" id="GO:0008137">
    <property type="term" value="F:NADH dehydrogenase (ubiquinone) activity"/>
    <property type="evidence" value="ECO:0007669"/>
    <property type="project" value="InterPro"/>
</dbReference>
<dbReference type="GO" id="GO:0050136">
    <property type="term" value="F:NADH:ubiquinone reductase (non-electrogenic) activity"/>
    <property type="evidence" value="ECO:0007669"/>
    <property type="project" value="UniProtKB-UniRule"/>
</dbReference>
<dbReference type="GO" id="GO:0048038">
    <property type="term" value="F:quinone binding"/>
    <property type="evidence" value="ECO:0007669"/>
    <property type="project" value="UniProtKB-KW"/>
</dbReference>
<dbReference type="FunFam" id="1.10.645.10:FF:000001">
    <property type="entry name" value="NADH-quinone oxidoreductase subunit C/D"/>
    <property type="match status" value="1"/>
</dbReference>
<dbReference type="FunFam" id="3.30.460.80:FF:000001">
    <property type="entry name" value="NADH-quinone oxidoreductase subunit C/D"/>
    <property type="match status" value="1"/>
</dbReference>
<dbReference type="Gene3D" id="1.10.645.10">
    <property type="entry name" value="Cytochrome-c3 Hydrogenase, chain B"/>
    <property type="match status" value="1"/>
</dbReference>
<dbReference type="Gene3D" id="3.30.460.80">
    <property type="entry name" value="NADH:ubiquinone oxidoreductase, 30kDa subunit"/>
    <property type="match status" value="1"/>
</dbReference>
<dbReference type="HAMAP" id="MF_01359">
    <property type="entry name" value="NDH1_NuoCD_1"/>
    <property type="match status" value="1"/>
</dbReference>
<dbReference type="HAMAP" id="MF_01358">
    <property type="entry name" value="NDH1_NuoD"/>
    <property type="match status" value="1"/>
</dbReference>
<dbReference type="InterPro" id="IPR010218">
    <property type="entry name" value="NADH_DH_suC"/>
</dbReference>
<dbReference type="InterPro" id="IPR023062">
    <property type="entry name" value="NADH_DH_suCD"/>
</dbReference>
<dbReference type="InterPro" id="IPR001135">
    <property type="entry name" value="NADH_Q_OxRdtase_suD"/>
</dbReference>
<dbReference type="InterPro" id="IPR037232">
    <property type="entry name" value="NADH_quin_OxRdtase_su_C/D-like"/>
</dbReference>
<dbReference type="InterPro" id="IPR001268">
    <property type="entry name" value="NADH_UbQ_OxRdtase_30kDa_su"/>
</dbReference>
<dbReference type="InterPro" id="IPR014029">
    <property type="entry name" value="NADH_UbQ_OxRdtase_49kDa_CS"/>
</dbReference>
<dbReference type="InterPro" id="IPR022885">
    <property type="entry name" value="NDH1_su_D/H"/>
</dbReference>
<dbReference type="InterPro" id="IPR029014">
    <property type="entry name" value="NiFe-Hase_large"/>
</dbReference>
<dbReference type="NCBIfam" id="TIGR01961">
    <property type="entry name" value="NuoC_fam"/>
    <property type="match status" value="1"/>
</dbReference>
<dbReference type="NCBIfam" id="TIGR01962">
    <property type="entry name" value="NuoD"/>
    <property type="match status" value="1"/>
</dbReference>
<dbReference type="NCBIfam" id="NF004739">
    <property type="entry name" value="PRK06075.1"/>
    <property type="match status" value="1"/>
</dbReference>
<dbReference type="NCBIfam" id="NF008728">
    <property type="entry name" value="PRK11742.1"/>
    <property type="match status" value="1"/>
</dbReference>
<dbReference type="PANTHER" id="PTHR11993:SF45">
    <property type="entry name" value="NADH-QUINONE OXIDOREDUCTASE SUBUNIT C_D"/>
    <property type="match status" value="1"/>
</dbReference>
<dbReference type="PANTHER" id="PTHR11993">
    <property type="entry name" value="NADH-UBIQUINONE OXIDOREDUCTASE 49 KDA SUBUNIT"/>
    <property type="match status" value="1"/>
</dbReference>
<dbReference type="Pfam" id="PF00329">
    <property type="entry name" value="Complex1_30kDa"/>
    <property type="match status" value="1"/>
</dbReference>
<dbReference type="Pfam" id="PF00346">
    <property type="entry name" value="Complex1_49kDa"/>
    <property type="match status" value="1"/>
</dbReference>
<dbReference type="SUPFAM" id="SSF56762">
    <property type="entry name" value="HydB/Nqo4-like"/>
    <property type="match status" value="1"/>
</dbReference>
<dbReference type="SUPFAM" id="SSF143243">
    <property type="entry name" value="Nqo5-like"/>
    <property type="match status" value="1"/>
</dbReference>
<dbReference type="PROSITE" id="PS00535">
    <property type="entry name" value="COMPLEX1_49K"/>
    <property type="match status" value="1"/>
</dbReference>
<organism>
    <name type="scientific">Salmonella paratyphi A (strain AKU_12601)</name>
    <dbReference type="NCBI Taxonomy" id="554290"/>
    <lineage>
        <taxon>Bacteria</taxon>
        <taxon>Pseudomonadati</taxon>
        <taxon>Pseudomonadota</taxon>
        <taxon>Gammaproteobacteria</taxon>
        <taxon>Enterobacterales</taxon>
        <taxon>Enterobacteriaceae</taxon>
        <taxon>Salmonella</taxon>
    </lineage>
</organism>
<proteinExistence type="inferred from homology"/>
<keyword id="KW-0997">Cell inner membrane</keyword>
<keyword id="KW-1003">Cell membrane</keyword>
<keyword id="KW-0472">Membrane</keyword>
<keyword id="KW-0511">Multifunctional enzyme</keyword>
<keyword id="KW-0520">NAD</keyword>
<keyword id="KW-0874">Quinone</keyword>
<keyword id="KW-1278">Translocase</keyword>
<keyword id="KW-0813">Transport</keyword>
<keyword id="KW-0830">Ubiquinone</keyword>
<reference key="1">
    <citation type="journal article" date="2009" name="BMC Genomics">
        <title>Pseudogene accumulation in the evolutionary histories of Salmonella enterica serovars Paratyphi A and Typhi.</title>
        <authorList>
            <person name="Holt K.E."/>
            <person name="Thomson N.R."/>
            <person name="Wain J."/>
            <person name="Langridge G.C."/>
            <person name="Hasan R."/>
            <person name="Bhutta Z.A."/>
            <person name="Quail M.A."/>
            <person name="Norbertczak H."/>
            <person name="Walker D."/>
            <person name="Simmonds M."/>
            <person name="White B."/>
            <person name="Bason N."/>
            <person name="Mungall K."/>
            <person name="Dougan G."/>
            <person name="Parkhill J."/>
        </authorList>
    </citation>
    <scope>NUCLEOTIDE SEQUENCE [LARGE SCALE GENOMIC DNA]</scope>
    <source>
        <strain>AKU_12601</strain>
    </source>
</reference>
<feature type="chain" id="PRO_0000358689" description="NADH-quinone oxidoreductase subunit C/D">
    <location>
        <begin position="1"/>
        <end position="600"/>
    </location>
</feature>
<feature type="region of interest" description="NADH dehydrogenase I subunit C" evidence="1">
    <location>
        <begin position="1"/>
        <end position="190"/>
    </location>
</feature>
<feature type="region of interest" description="NADH dehydrogenase I subunit D" evidence="1">
    <location>
        <begin position="214"/>
        <end position="600"/>
    </location>
</feature>
<protein>
    <recommendedName>
        <fullName evidence="1">NADH-quinone oxidoreductase subunit C/D</fullName>
        <ecNumber evidence="1">7.1.1.-</ecNumber>
    </recommendedName>
    <alternativeName>
        <fullName evidence="1">NADH dehydrogenase I subunit C/D</fullName>
    </alternativeName>
    <alternativeName>
        <fullName evidence="1">NDH-1 subunit C/D</fullName>
    </alternativeName>
</protein>
<comment type="function">
    <text evidence="1">NDH-1 shuttles electrons from NADH, via FMN and iron-sulfur (Fe-S) centers, to quinones in the respiratory chain. The immediate electron acceptor for the enzyme in this species is believed to be ubiquinone. Couples the redox reaction to proton translocation (for every two electrons transferred, four hydrogen ions are translocated across the cytoplasmic membrane), and thus conserves the redox energy in a proton gradient.</text>
</comment>
<comment type="catalytic activity">
    <reaction evidence="1">
        <text>a quinone + NADH + 5 H(+)(in) = a quinol + NAD(+) + 4 H(+)(out)</text>
        <dbReference type="Rhea" id="RHEA:57888"/>
        <dbReference type="ChEBI" id="CHEBI:15378"/>
        <dbReference type="ChEBI" id="CHEBI:24646"/>
        <dbReference type="ChEBI" id="CHEBI:57540"/>
        <dbReference type="ChEBI" id="CHEBI:57945"/>
        <dbReference type="ChEBI" id="CHEBI:132124"/>
    </reaction>
</comment>
<comment type="subunit">
    <text evidence="1">NDH-1 is composed of 13 different subunits. Subunits NuoB, CD, E, F, and G constitute the peripheral sector of the complex.</text>
</comment>
<comment type="subcellular location">
    <subcellularLocation>
        <location evidence="1">Cell inner membrane</location>
        <topology evidence="1">Peripheral membrane protein</topology>
        <orientation evidence="1">Cytoplasmic side</orientation>
    </subcellularLocation>
</comment>
<comment type="similarity">
    <text evidence="1">In the N-terminal section; belongs to the complex I 30 kDa subunit family.</text>
</comment>
<comment type="similarity">
    <text evidence="1">In the C-terminal section; belongs to the complex I 49 kDa subunit family.</text>
</comment>
<evidence type="ECO:0000255" key="1">
    <source>
        <dbReference type="HAMAP-Rule" id="MF_01359"/>
    </source>
</evidence>
<sequence length="600" mass="68861">MVNNMTDLTAQDAAWSTRDHLDDPVIGELRNRFGPDAFTVQATRTGIPVVWVKREQLLEVGDFLKKLPKPYVMLFDLHGMDERLRTHRDGLPAADFSVFYHLISIERNRDIMLKVALSENDLRVPTFTKLFPNANWYERETWEMFGIDIEGHPHLTRIMMPQTWEGHPLRKDYPARATEFDPFELTKAKQDLEMEALTFKPEDWGMKRGTDNEDFMFLNLGPNHPSAHGAFRIILQLDGEEIVDCVPDIGYHHRGAEKMGERQSWHSYIPYTDRIEYLGGCVNEMPYVLAVEKLAGITVPDRVNVIRVMLSELFRINSHLLYISTFIQDVGAMTPVFFAFTDRQKIYDLVEAITGFRMHPAWFRIGGVAHDLPRGWDRLLREFLEWMPKRLDSYEKAALRNTILKGRSQGVAAYGAKEALEWGTTGAGLRATGIDFDVRKWRPYSGYENFDFEVPVGGGVSDCYTRVMLKVEELRQSLRILQQCLDNMPEGPFKADHPLTTPPPKERTLQHIETLITHFLQVSWGPVMPAQESFQMVEATKGINSYYLTSDGSTMSYRTRVRTPSFAHLQQIPSAIRGSLVSDLIVYLGSIDFVMSDVDR</sequence>